<keyword id="KW-1185">Reference proteome</keyword>
<organismHost>
    <name type="scientific">Acanthamoeba polyphaga</name>
    <name type="common">Amoeba</name>
    <dbReference type="NCBI Taxonomy" id="5757"/>
</organismHost>
<gene>
    <name type="ordered locus">MIMI_R661</name>
</gene>
<feature type="chain" id="PRO_0000071306" description="Uncharacterized protein R661">
    <location>
        <begin position="1"/>
        <end position="218"/>
    </location>
</feature>
<proteinExistence type="predicted"/>
<reference key="1">
    <citation type="journal article" date="2004" name="Science">
        <title>The 1.2-megabase genome sequence of Mimivirus.</title>
        <authorList>
            <person name="Raoult D."/>
            <person name="Audic S."/>
            <person name="Robert C."/>
            <person name="Abergel C."/>
            <person name="Renesto P."/>
            <person name="Ogata H."/>
            <person name="La Scola B."/>
            <person name="Susan M."/>
            <person name="Claverie J.-M."/>
        </authorList>
    </citation>
    <scope>NUCLEOTIDE SEQUENCE [LARGE SCALE GENOMIC DNA]</scope>
    <source>
        <strain>Rowbotham-Bradford</strain>
    </source>
</reference>
<accession>Q5UQ61</accession>
<dbReference type="EMBL" id="AY653733">
    <property type="protein sequence ID" value="AAV50922.1"/>
    <property type="molecule type" value="Genomic_DNA"/>
</dbReference>
<dbReference type="KEGG" id="vg:9925306"/>
<dbReference type="Proteomes" id="UP000001134">
    <property type="component" value="Genome"/>
</dbReference>
<sequence length="218" mass="25221">MVIYNILMDLRIVKNENCTDDLDYQSHTNNVHNEFLKNIMCQDCFKTKNNCLCKNIHECKTIKPRKICEYCNEIYIKKKIIKGKNSIQIKWQCPKSHQSGSHCKKCMSQLINGECRNYDCNCGKDGSCCQICGLMYKYGKCINGHDDSNKCDYCGMIYVDGVYLCGHNGDICEECVLLKEHGFCPLVDEHNKCSGEISTNYFNDNYDEMDITIHDYLI</sequence>
<organism>
    <name type="scientific">Acanthamoeba polyphaga mimivirus</name>
    <name type="common">APMV</name>
    <dbReference type="NCBI Taxonomy" id="212035"/>
    <lineage>
        <taxon>Viruses</taxon>
        <taxon>Varidnaviria</taxon>
        <taxon>Bamfordvirae</taxon>
        <taxon>Nucleocytoviricota</taxon>
        <taxon>Megaviricetes</taxon>
        <taxon>Imitervirales</taxon>
        <taxon>Mimiviridae</taxon>
        <taxon>Megamimivirinae</taxon>
        <taxon>Mimivirus</taxon>
        <taxon>Mimivirus bradfordmassiliense</taxon>
    </lineage>
</organism>
<protein>
    <recommendedName>
        <fullName>Uncharacterized protein R661</fullName>
    </recommendedName>
</protein>
<name>YR661_MIMIV</name>